<accession>Q63Q32</accession>
<sequence>MAKDDVIQMQGEVIENLPNATFRVKLENGHVVLGHISGKMRMHYIRILPGDKVTVELTPYDLSRARIVFRAK</sequence>
<feature type="chain" id="PRO_0000095762" description="Translation initiation factor IF-1 2">
    <location>
        <begin position="1"/>
        <end position="72"/>
    </location>
</feature>
<feature type="domain" description="S1-like" evidence="1">
    <location>
        <begin position="1"/>
        <end position="72"/>
    </location>
</feature>
<gene>
    <name evidence="1" type="primary">infA2</name>
    <name type="ordered locus">BPSL3192</name>
</gene>
<reference key="1">
    <citation type="journal article" date="2004" name="Proc. Natl. Acad. Sci. U.S.A.">
        <title>Genomic plasticity of the causative agent of melioidosis, Burkholderia pseudomallei.</title>
        <authorList>
            <person name="Holden M.T.G."/>
            <person name="Titball R.W."/>
            <person name="Peacock S.J."/>
            <person name="Cerdeno-Tarraga A.-M."/>
            <person name="Atkins T."/>
            <person name="Crossman L.C."/>
            <person name="Pitt T."/>
            <person name="Churcher C."/>
            <person name="Mungall K.L."/>
            <person name="Bentley S.D."/>
            <person name="Sebaihia M."/>
            <person name="Thomson N.R."/>
            <person name="Bason N."/>
            <person name="Beacham I.R."/>
            <person name="Brooks K."/>
            <person name="Brown K.A."/>
            <person name="Brown N.F."/>
            <person name="Challis G.L."/>
            <person name="Cherevach I."/>
            <person name="Chillingworth T."/>
            <person name="Cronin A."/>
            <person name="Crossett B."/>
            <person name="Davis P."/>
            <person name="DeShazer D."/>
            <person name="Feltwell T."/>
            <person name="Fraser A."/>
            <person name="Hance Z."/>
            <person name="Hauser H."/>
            <person name="Holroyd S."/>
            <person name="Jagels K."/>
            <person name="Keith K.E."/>
            <person name="Maddison M."/>
            <person name="Moule S."/>
            <person name="Price C."/>
            <person name="Quail M.A."/>
            <person name="Rabbinowitsch E."/>
            <person name="Rutherford K."/>
            <person name="Sanders M."/>
            <person name="Simmonds M."/>
            <person name="Songsivilai S."/>
            <person name="Stevens K."/>
            <person name="Tumapa S."/>
            <person name="Vesaratchavest M."/>
            <person name="Whitehead S."/>
            <person name="Yeats C."/>
            <person name="Barrell B.G."/>
            <person name="Oyston P.C.F."/>
            <person name="Parkhill J."/>
        </authorList>
    </citation>
    <scope>NUCLEOTIDE SEQUENCE [LARGE SCALE GENOMIC DNA]</scope>
    <source>
        <strain>K96243</strain>
    </source>
</reference>
<evidence type="ECO:0000255" key="1">
    <source>
        <dbReference type="HAMAP-Rule" id="MF_00075"/>
    </source>
</evidence>
<comment type="function">
    <text evidence="1">One of the essential components for the initiation of protein synthesis. Stabilizes the binding of IF-2 and IF-3 on the 30S subunit to which N-formylmethionyl-tRNA(fMet) subsequently binds. Helps modulate mRNA selection, yielding the 30S pre-initiation complex (PIC). Upon addition of the 50S ribosomal subunit IF-1, IF-2 and IF-3 are released leaving the mature 70S translation initiation complex.</text>
</comment>
<comment type="subunit">
    <text evidence="1">Component of the 30S ribosomal translation pre-initiation complex which assembles on the 30S ribosome in the order IF-2 and IF-3, IF-1 and N-formylmethionyl-tRNA(fMet); mRNA recruitment can occur at any time during PIC assembly.</text>
</comment>
<comment type="subcellular location">
    <subcellularLocation>
        <location evidence="1">Cytoplasm</location>
    </subcellularLocation>
</comment>
<comment type="similarity">
    <text evidence="1">Belongs to the IF-1 family.</text>
</comment>
<dbReference type="EMBL" id="BX571965">
    <property type="protein sequence ID" value="CAH37203.1"/>
    <property type="molecule type" value="Genomic_DNA"/>
</dbReference>
<dbReference type="RefSeq" id="YP_109786.1">
    <property type="nucleotide sequence ID" value="NC_006350.1"/>
</dbReference>
<dbReference type="SMR" id="Q63Q32"/>
<dbReference type="STRING" id="272560.BPSL3192"/>
<dbReference type="KEGG" id="bps:BPSL3192"/>
<dbReference type="PATRIC" id="fig|272560.51.peg.2046"/>
<dbReference type="eggNOG" id="COG0361">
    <property type="taxonomic scope" value="Bacteria"/>
</dbReference>
<dbReference type="PRO" id="PR:Q63Q32"/>
<dbReference type="Proteomes" id="UP000000605">
    <property type="component" value="Chromosome 1"/>
</dbReference>
<dbReference type="GO" id="GO:0005829">
    <property type="term" value="C:cytosol"/>
    <property type="evidence" value="ECO:0007669"/>
    <property type="project" value="TreeGrafter"/>
</dbReference>
<dbReference type="GO" id="GO:0043022">
    <property type="term" value="F:ribosome binding"/>
    <property type="evidence" value="ECO:0007669"/>
    <property type="project" value="UniProtKB-UniRule"/>
</dbReference>
<dbReference type="GO" id="GO:0019843">
    <property type="term" value="F:rRNA binding"/>
    <property type="evidence" value="ECO:0007669"/>
    <property type="project" value="UniProtKB-UniRule"/>
</dbReference>
<dbReference type="GO" id="GO:0003743">
    <property type="term" value="F:translation initiation factor activity"/>
    <property type="evidence" value="ECO:0007669"/>
    <property type="project" value="UniProtKB-UniRule"/>
</dbReference>
<dbReference type="CDD" id="cd04451">
    <property type="entry name" value="S1_IF1"/>
    <property type="match status" value="1"/>
</dbReference>
<dbReference type="FunFam" id="2.40.50.140:FF:000002">
    <property type="entry name" value="Translation initiation factor IF-1"/>
    <property type="match status" value="1"/>
</dbReference>
<dbReference type="Gene3D" id="2.40.50.140">
    <property type="entry name" value="Nucleic acid-binding proteins"/>
    <property type="match status" value="1"/>
</dbReference>
<dbReference type="HAMAP" id="MF_00075">
    <property type="entry name" value="IF_1"/>
    <property type="match status" value="1"/>
</dbReference>
<dbReference type="InterPro" id="IPR012340">
    <property type="entry name" value="NA-bd_OB-fold"/>
</dbReference>
<dbReference type="InterPro" id="IPR006196">
    <property type="entry name" value="RNA-binding_domain_S1_IF1"/>
</dbReference>
<dbReference type="InterPro" id="IPR003029">
    <property type="entry name" value="S1_domain"/>
</dbReference>
<dbReference type="InterPro" id="IPR004368">
    <property type="entry name" value="TIF_IF1"/>
</dbReference>
<dbReference type="NCBIfam" id="TIGR00008">
    <property type="entry name" value="infA"/>
    <property type="match status" value="1"/>
</dbReference>
<dbReference type="PANTHER" id="PTHR33370">
    <property type="entry name" value="TRANSLATION INITIATION FACTOR IF-1, CHLOROPLASTIC"/>
    <property type="match status" value="1"/>
</dbReference>
<dbReference type="PANTHER" id="PTHR33370:SF1">
    <property type="entry name" value="TRANSLATION INITIATION FACTOR IF-1, CHLOROPLASTIC"/>
    <property type="match status" value="1"/>
</dbReference>
<dbReference type="Pfam" id="PF01176">
    <property type="entry name" value="eIF-1a"/>
    <property type="match status" value="1"/>
</dbReference>
<dbReference type="SMART" id="SM00316">
    <property type="entry name" value="S1"/>
    <property type="match status" value="1"/>
</dbReference>
<dbReference type="SUPFAM" id="SSF50249">
    <property type="entry name" value="Nucleic acid-binding proteins"/>
    <property type="match status" value="1"/>
</dbReference>
<dbReference type="PROSITE" id="PS50832">
    <property type="entry name" value="S1_IF1_TYPE"/>
    <property type="match status" value="1"/>
</dbReference>
<name>IF12_BURPS</name>
<proteinExistence type="inferred from homology"/>
<organism>
    <name type="scientific">Burkholderia pseudomallei (strain K96243)</name>
    <dbReference type="NCBI Taxonomy" id="272560"/>
    <lineage>
        <taxon>Bacteria</taxon>
        <taxon>Pseudomonadati</taxon>
        <taxon>Pseudomonadota</taxon>
        <taxon>Betaproteobacteria</taxon>
        <taxon>Burkholderiales</taxon>
        <taxon>Burkholderiaceae</taxon>
        <taxon>Burkholderia</taxon>
        <taxon>pseudomallei group</taxon>
    </lineage>
</organism>
<keyword id="KW-0963">Cytoplasm</keyword>
<keyword id="KW-0396">Initiation factor</keyword>
<keyword id="KW-0648">Protein biosynthesis</keyword>
<keyword id="KW-1185">Reference proteome</keyword>
<keyword id="KW-0694">RNA-binding</keyword>
<keyword id="KW-0699">rRNA-binding</keyword>
<protein>
    <recommendedName>
        <fullName evidence="1">Translation initiation factor IF-1 2</fullName>
    </recommendedName>
</protein>